<organism>
    <name type="scientific">Yersinia pestis bv. Antiqua (strain Nepal516)</name>
    <dbReference type="NCBI Taxonomy" id="377628"/>
    <lineage>
        <taxon>Bacteria</taxon>
        <taxon>Pseudomonadati</taxon>
        <taxon>Pseudomonadota</taxon>
        <taxon>Gammaproteobacteria</taxon>
        <taxon>Enterobacterales</taxon>
        <taxon>Yersiniaceae</taxon>
        <taxon>Yersinia</taxon>
    </lineage>
</organism>
<protein>
    <recommendedName>
        <fullName evidence="1">5'-deoxynucleotidase YPN_2153</fullName>
        <ecNumber evidence="1">3.1.3.89</ecNumber>
    </recommendedName>
    <alternativeName>
        <fullName evidence="1">5'-deoxyribonucleotidase</fullName>
    </alternativeName>
    <alternativeName>
        <fullName evidence="1">Nucleoside 5'-monophosphate phosphohydrolase</fullName>
    </alternativeName>
</protein>
<keyword id="KW-0963">Cytoplasm</keyword>
<keyword id="KW-0378">Hydrolase</keyword>
<keyword id="KW-0479">Metal-binding</keyword>
<keyword id="KW-0547">Nucleotide-binding</keyword>
<evidence type="ECO:0000255" key="1">
    <source>
        <dbReference type="HAMAP-Rule" id="MF_01100"/>
    </source>
</evidence>
<evidence type="ECO:0000255" key="2">
    <source>
        <dbReference type="PROSITE-ProRule" id="PRU01175"/>
    </source>
</evidence>
<proteinExistence type="inferred from homology"/>
<gene>
    <name type="ordered locus">YPN_2153</name>
    <name type="ORF">YP516_2405</name>
</gene>
<feature type="chain" id="PRO_1000064964" description="5'-deoxynucleotidase YPN_2153">
    <location>
        <begin position="1"/>
        <end position="197"/>
    </location>
</feature>
<feature type="domain" description="HD" evidence="2">
    <location>
        <begin position="28"/>
        <end position="140"/>
    </location>
</feature>
<feature type="binding site" evidence="1">
    <location>
        <begin position="16"/>
        <end position="17"/>
    </location>
    <ligand>
        <name>substrate</name>
    </ligand>
</feature>
<feature type="binding site" evidence="1">
    <location>
        <position position="31"/>
    </location>
    <ligand>
        <name>a divalent metal cation</name>
        <dbReference type="ChEBI" id="CHEBI:60240"/>
    </ligand>
</feature>
<feature type="binding site" evidence="1">
    <location>
        <position position="31"/>
    </location>
    <ligand>
        <name>substrate</name>
    </ligand>
</feature>
<feature type="binding site" evidence="1">
    <location>
        <position position="66"/>
    </location>
    <ligand>
        <name>a divalent metal cation</name>
        <dbReference type="ChEBI" id="CHEBI:60240"/>
    </ligand>
</feature>
<feature type="binding site" evidence="1">
    <location>
        <position position="67"/>
    </location>
    <ligand>
        <name>a divalent metal cation</name>
        <dbReference type="ChEBI" id="CHEBI:60240"/>
    </ligand>
</feature>
<feature type="binding site" evidence="1">
    <location>
        <position position="67"/>
    </location>
    <ligand>
        <name>substrate</name>
    </ligand>
</feature>
<feature type="binding site" evidence="1">
    <location>
        <begin position="75"/>
        <end position="78"/>
    </location>
    <ligand>
        <name>substrate</name>
    </ligand>
</feature>
<feature type="binding site" evidence="1">
    <location>
        <position position="135"/>
    </location>
    <ligand>
        <name>a divalent metal cation</name>
        <dbReference type="ChEBI" id="CHEBI:60240"/>
    </ligand>
</feature>
<feature type="binding site" evidence="1">
    <location>
        <position position="135"/>
    </location>
    <ligand>
        <name>substrate</name>
    </ligand>
</feature>
<feature type="site" description="Appears to be important in orienting the phosphate for catalysis" evidence="1">
    <location>
        <position position="16"/>
    </location>
</feature>
<dbReference type="EC" id="3.1.3.89" evidence="1"/>
<dbReference type="EMBL" id="CP000305">
    <property type="protein sequence ID" value="ABG18482.1"/>
    <property type="molecule type" value="Genomic_DNA"/>
</dbReference>
<dbReference type="EMBL" id="ACNQ01000013">
    <property type="protein sequence ID" value="EEO76208.1"/>
    <property type="molecule type" value="Genomic_DNA"/>
</dbReference>
<dbReference type="SMR" id="Q1CHP8"/>
<dbReference type="KEGG" id="ypn:YPN_2153"/>
<dbReference type="HOGENOM" id="CLU_084784_0_0_6"/>
<dbReference type="Proteomes" id="UP000008936">
    <property type="component" value="Chromosome"/>
</dbReference>
<dbReference type="GO" id="GO:0005737">
    <property type="term" value="C:cytoplasm"/>
    <property type="evidence" value="ECO:0007669"/>
    <property type="project" value="UniProtKB-SubCell"/>
</dbReference>
<dbReference type="GO" id="GO:0002953">
    <property type="term" value="F:5'-deoxynucleotidase activity"/>
    <property type="evidence" value="ECO:0007669"/>
    <property type="project" value="UniProtKB-EC"/>
</dbReference>
<dbReference type="GO" id="GO:0046872">
    <property type="term" value="F:metal ion binding"/>
    <property type="evidence" value="ECO:0007669"/>
    <property type="project" value="UniProtKB-KW"/>
</dbReference>
<dbReference type="GO" id="GO:0000166">
    <property type="term" value="F:nucleotide binding"/>
    <property type="evidence" value="ECO:0007669"/>
    <property type="project" value="UniProtKB-KW"/>
</dbReference>
<dbReference type="FunFam" id="1.10.3210.10:FF:000002">
    <property type="entry name" value="Nucleotidase YfbR"/>
    <property type="match status" value="1"/>
</dbReference>
<dbReference type="Gene3D" id="1.10.3210.10">
    <property type="entry name" value="Hypothetical protein af1432"/>
    <property type="match status" value="1"/>
</dbReference>
<dbReference type="HAMAP" id="MF_01100">
    <property type="entry name" value="5DNU"/>
    <property type="match status" value="1"/>
</dbReference>
<dbReference type="InterPro" id="IPR003607">
    <property type="entry name" value="HD/PDEase_dom"/>
</dbReference>
<dbReference type="InterPro" id="IPR006674">
    <property type="entry name" value="HD_domain"/>
</dbReference>
<dbReference type="InterPro" id="IPR022971">
    <property type="entry name" value="YfbR"/>
</dbReference>
<dbReference type="InterPro" id="IPR039356">
    <property type="entry name" value="YfbR/HDDC2"/>
</dbReference>
<dbReference type="NCBIfam" id="NF003009">
    <property type="entry name" value="PRK03826.1"/>
    <property type="match status" value="1"/>
</dbReference>
<dbReference type="PANTHER" id="PTHR11845">
    <property type="entry name" value="5'-DEOXYNUCLEOTIDASE HDDC2"/>
    <property type="match status" value="1"/>
</dbReference>
<dbReference type="PANTHER" id="PTHR11845:SF13">
    <property type="entry name" value="5'-DEOXYNUCLEOTIDASE HDDC2"/>
    <property type="match status" value="1"/>
</dbReference>
<dbReference type="Pfam" id="PF12917">
    <property type="entry name" value="YfbR-like"/>
    <property type="match status" value="1"/>
</dbReference>
<dbReference type="SMART" id="SM00471">
    <property type="entry name" value="HDc"/>
    <property type="match status" value="1"/>
</dbReference>
<dbReference type="SUPFAM" id="SSF109604">
    <property type="entry name" value="HD-domain/PDEase-like"/>
    <property type="match status" value="1"/>
</dbReference>
<dbReference type="PROSITE" id="PS51831">
    <property type="entry name" value="HD"/>
    <property type="match status" value="1"/>
</dbReference>
<name>5DNU_YERPN</name>
<comment type="function">
    <text evidence="1">Catalyzes the strictly specific dephosphorylation of 2'-deoxyribonucleoside 5'-monophosphates.</text>
</comment>
<comment type="catalytic activity">
    <reaction evidence="1">
        <text>a 2'-deoxyribonucleoside 5'-phosphate + H2O = a 2'-deoxyribonucleoside + phosphate</text>
        <dbReference type="Rhea" id="RHEA:36167"/>
        <dbReference type="ChEBI" id="CHEBI:15377"/>
        <dbReference type="ChEBI" id="CHEBI:18274"/>
        <dbReference type="ChEBI" id="CHEBI:43474"/>
        <dbReference type="ChEBI" id="CHEBI:65317"/>
        <dbReference type="EC" id="3.1.3.89"/>
    </reaction>
</comment>
<comment type="cofactor">
    <cofactor evidence="1">
        <name>a divalent metal cation</name>
        <dbReference type="ChEBI" id="CHEBI:60240"/>
    </cofactor>
</comment>
<comment type="subunit">
    <text evidence="1">Homodimer.</text>
</comment>
<comment type="subcellular location">
    <subcellularLocation>
        <location evidence="1">Cytoplasm</location>
    </subcellularLocation>
</comment>
<comment type="similarity">
    <text evidence="1">Belongs to the 5DNU family.</text>
</comment>
<sequence length="197" mass="22729">MSHFFAHLSRLKLINRWPLMRNVRTENVSEHSLQVAFVAHALAIIKNRKFNGNLNAERIALLAMYHDASEVITGDLPTPIKYHNPKIAHEYKKIEKVAQQKLIEMLPKELQHDFRCLLDEHYYSEEEKALVKQADALCAYLKCLEELSAGNNEFIQAKARLEKTLAIRQSPEMDYFMAVFVPSFSLSLDEISLDSLD</sequence>
<reference key="1">
    <citation type="journal article" date="2006" name="J. Bacteriol.">
        <title>Complete genome sequence of Yersinia pestis strains Antiqua and Nepal516: evidence of gene reduction in an emerging pathogen.</title>
        <authorList>
            <person name="Chain P.S.G."/>
            <person name="Hu P."/>
            <person name="Malfatti S.A."/>
            <person name="Radnedge L."/>
            <person name="Larimer F."/>
            <person name="Vergez L.M."/>
            <person name="Worsham P."/>
            <person name="Chu M.C."/>
            <person name="Andersen G.L."/>
        </authorList>
    </citation>
    <scope>NUCLEOTIDE SEQUENCE [LARGE SCALE GENOMIC DNA]</scope>
    <source>
        <strain>Nepal516</strain>
    </source>
</reference>
<reference key="2">
    <citation type="submission" date="2009-04" db="EMBL/GenBank/DDBJ databases">
        <title>Yersinia pestis Nepal516A whole genome shotgun sequencing project.</title>
        <authorList>
            <person name="Plunkett G. III"/>
            <person name="Anderson B.D."/>
            <person name="Baumler D.J."/>
            <person name="Burland V."/>
            <person name="Cabot E.L."/>
            <person name="Glasner J.D."/>
            <person name="Mau B."/>
            <person name="Neeno-Eckwall E."/>
            <person name="Perna N.T."/>
            <person name="Munk A.C."/>
            <person name="Tapia R."/>
            <person name="Green L.D."/>
            <person name="Rogers Y.C."/>
            <person name="Detter J.C."/>
            <person name="Bruce D.C."/>
            <person name="Brettin T.S."/>
        </authorList>
    </citation>
    <scope>NUCLEOTIDE SEQUENCE [LARGE SCALE GENOMIC DNA]</scope>
    <source>
        <strain>Nepal516</strain>
    </source>
</reference>
<accession>Q1CHP8</accession>
<accession>C4GV80</accession>